<accession>Q2GJB4</accession>
<reference key="1">
    <citation type="journal article" date="2006" name="PLoS Genet.">
        <title>Comparative genomics of emerging human ehrlichiosis agents.</title>
        <authorList>
            <person name="Dunning Hotopp J.C."/>
            <person name="Lin M."/>
            <person name="Madupu R."/>
            <person name="Crabtree J."/>
            <person name="Angiuoli S.V."/>
            <person name="Eisen J.A."/>
            <person name="Seshadri R."/>
            <person name="Ren Q."/>
            <person name="Wu M."/>
            <person name="Utterback T.R."/>
            <person name="Smith S."/>
            <person name="Lewis M."/>
            <person name="Khouri H."/>
            <person name="Zhang C."/>
            <person name="Niu H."/>
            <person name="Lin Q."/>
            <person name="Ohashi N."/>
            <person name="Zhi N."/>
            <person name="Nelson W.C."/>
            <person name="Brinkac L.M."/>
            <person name="Dodson R.J."/>
            <person name="Rosovitz M.J."/>
            <person name="Sundaram J.P."/>
            <person name="Daugherty S.C."/>
            <person name="Davidsen T."/>
            <person name="Durkin A.S."/>
            <person name="Gwinn M.L."/>
            <person name="Haft D.H."/>
            <person name="Selengut J.D."/>
            <person name="Sullivan S.A."/>
            <person name="Zafar N."/>
            <person name="Zhou L."/>
            <person name="Benahmed F."/>
            <person name="Forberger H."/>
            <person name="Halpin R."/>
            <person name="Mulligan S."/>
            <person name="Robinson J."/>
            <person name="White O."/>
            <person name="Rikihisa Y."/>
            <person name="Tettelin H."/>
        </authorList>
    </citation>
    <scope>NUCLEOTIDE SEQUENCE [LARGE SCALE GENOMIC DNA]</scope>
    <source>
        <strain>HZ</strain>
    </source>
</reference>
<name>CLPP_ANAPZ</name>
<evidence type="ECO:0000255" key="1">
    <source>
        <dbReference type="HAMAP-Rule" id="MF_00444"/>
    </source>
</evidence>
<feature type="chain" id="PRO_0000236383" description="ATP-dependent Clp protease proteolytic subunit">
    <location>
        <begin position="1"/>
        <end position="197"/>
    </location>
</feature>
<feature type="active site" description="Nucleophile" evidence="1">
    <location>
        <position position="98"/>
    </location>
</feature>
<feature type="active site" evidence="1">
    <location>
        <position position="123"/>
    </location>
</feature>
<gene>
    <name evidence="1" type="primary">clpP</name>
    <name type="ordered locus">APH_0970</name>
</gene>
<comment type="function">
    <text evidence="1">Cleaves peptides in various proteins in a process that requires ATP hydrolysis. Has a chymotrypsin-like activity. Plays a major role in the degradation of misfolded proteins.</text>
</comment>
<comment type="catalytic activity">
    <reaction evidence="1">
        <text>Hydrolysis of proteins to small peptides in the presence of ATP and magnesium. alpha-casein is the usual test substrate. In the absence of ATP, only oligopeptides shorter than five residues are hydrolyzed (such as succinyl-Leu-Tyr-|-NHMec, and Leu-Tyr-Leu-|-Tyr-Trp, in which cleavage of the -Tyr-|-Leu- and -Tyr-|-Trp bonds also occurs).</text>
        <dbReference type="EC" id="3.4.21.92"/>
    </reaction>
</comment>
<comment type="subunit">
    <text evidence="1">Fourteen ClpP subunits assemble into 2 heptameric rings which stack back to back to give a disk-like structure with a central cavity, resembling the structure of eukaryotic proteasomes.</text>
</comment>
<comment type="subcellular location">
    <subcellularLocation>
        <location evidence="1">Cytoplasm</location>
    </subcellularLocation>
</comment>
<comment type="similarity">
    <text evidence="1">Belongs to the peptidase S14 family.</text>
</comment>
<sequence length="197" mass="21989">MNLVPMVVEQTGRGERAYDIYSRLLKERIIFVTGPIEDEMASLIVAQLVFLEAEDPEKDISMYINSPGGVVTAGLSIYDTMQYIKPNVATLCLGQAASMGSLLLCAGAPGMRCALPNSRVMIHQPSGGFRGQATDIEIHAREILEIKRRLNEIFVRHTGKSLEEIESSMERDNFMIAEKARDFGIIDKVIEKRIEEK</sequence>
<organism>
    <name type="scientific">Anaplasma phagocytophilum (strain HZ)</name>
    <dbReference type="NCBI Taxonomy" id="212042"/>
    <lineage>
        <taxon>Bacteria</taxon>
        <taxon>Pseudomonadati</taxon>
        <taxon>Pseudomonadota</taxon>
        <taxon>Alphaproteobacteria</taxon>
        <taxon>Rickettsiales</taxon>
        <taxon>Anaplasmataceae</taxon>
        <taxon>Anaplasma</taxon>
        <taxon>phagocytophilum group</taxon>
    </lineage>
</organism>
<proteinExistence type="inferred from homology"/>
<protein>
    <recommendedName>
        <fullName evidence="1">ATP-dependent Clp protease proteolytic subunit</fullName>
        <ecNumber evidence="1">3.4.21.92</ecNumber>
    </recommendedName>
    <alternativeName>
        <fullName evidence="1">Endopeptidase Clp</fullName>
    </alternativeName>
</protein>
<keyword id="KW-0963">Cytoplasm</keyword>
<keyword id="KW-0378">Hydrolase</keyword>
<keyword id="KW-0645">Protease</keyword>
<keyword id="KW-0720">Serine protease</keyword>
<dbReference type="EC" id="3.4.21.92" evidence="1"/>
<dbReference type="EMBL" id="CP000235">
    <property type="protein sequence ID" value="ABD43831.1"/>
    <property type="molecule type" value="Genomic_DNA"/>
</dbReference>
<dbReference type="RefSeq" id="WP_011451050.1">
    <property type="nucleotide sequence ID" value="NC_007797.1"/>
</dbReference>
<dbReference type="SMR" id="Q2GJB4"/>
<dbReference type="STRING" id="212042.APH_0970"/>
<dbReference type="MEROPS" id="S14.001"/>
<dbReference type="PaxDb" id="212042-APH_0970"/>
<dbReference type="EnsemblBacteria" id="ABD43831">
    <property type="protein sequence ID" value="ABD43831"/>
    <property type="gene ID" value="APH_0970"/>
</dbReference>
<dbReference type="GeneID" id="92748084"/>
<dbReference type="KEGG" id="aph:APH_0970"/>
<dbReference type="eggNOG" id="COG0740">
    <property type="taxonomic scope" value="Bacteria"/>
</dbReference>
<dbReference type="HOGENOM" id="CLU_058707_3_3_5"/>
<dbReference type="Proteomes" id="UP000001943">
    <property type="component" value="Chromosome"/>
</dbReference>
<dbReference type="GO" id="GO:0005737">
    <property type="term" value="C:cytoplasm"/>
    <property type="evidence" value="ECO:0007669"/>
    <property type="project" value="UniProtKB-SubCell"/>
</dbReference>
<dbReference type="GO" id="GO:0009368">
    <property type="term" value="C:endopeptidase Clp complex"/>
    <property type="evidence" value="ECO:0007669"/>
    <property type="project" value="TreeGrafter"/>
</dbReference>
<dbReference type="GO" id="GO:0004176">
    <property type="term" value="F:ATP-dependent peptidase activity"/>
    <property type="evidence" value="ECO:0007669"/>
    <property type="project" value="InterPro"/>
</dbReference>
<dbReference type="GO" id="GO:0051117">
    <property type="term" value="F:ATPase binding"/>
    <property type="evidence" value="ECO:0007669"/>
    <property type="project" value="TreeGrafter"/>
</dbReference>
<dbReference type="GO" id="GO:0004252">
    <property type="term" value="F:serine-type endopeptidase activity"/>
    <property type="evidence" value="ECO:0007669"/>
    <property type="project" value="UniProtKB-UniRule"/>
</dbReference>
<dbReference type="GO" id="GO:0006515">
    <property type="term" value="P:protein quality control for misfolded or incompletely synthesized proteins"/>
    <property type="evidence" value="ECO:0007669"/>
    <property type="project" value="TreeGrafter"/>
</dbReference>
<dbReference type="CDD" id="cd07017">
    <property type="entry name" value="S14_ClpP_2"/>
    <property type="match status" value="1"/>
</dbReference>
<dbReference type="FunFam" id="3.90.226.10:FF:000001">
    <property type="entry name" value="ATP-dependent Clp protease proteolytic subunit"/>
    <property type="match status" value="1"/>
</dbReference>
<dbReference type="Gene3D" id="3.90.226.10">
    <property type="entry name" value="2-enoyl-CoA Hydratase, Chain A, domain 1"/>
    <property type="match status" value="1"/>
</dbReference>
<dbReference type="HAMAP" id="MF_00444">
    <property type="entry name" value="ClpP"/>
    <property type="match status" value="1"/>
</dbReference>
<dbReference type="InterPro" id="IPR001907">
    <property type="entry name" value="ClpP"/>
</dbReference>
<dbReference type="InterPro" id="IPR029045">
    <property type="entry name" value="ClpP/crotonase-like_dom_sf"/>
</dbReference>
<dbReference type="InterPro" id="IPR023562">
    <property type="entry name" value="ClpP/TepA"/>
</dbReference>
<dbReference type="InterPro" id="IPR033135">
    <property type="entry name" value="ClpP_His_AS"/>
</dbReference>
<dbReference type="InterPro" id="IPR018215">
    <property type="entry name" value="ClpP_Ser_AS"/>
</dbReference>
<dbReference type="NCBIfam" id="TIGR00493">
    <property type="entry name" value="clpP"/>
    <property type="match status" value="1"/>
</dbReference>
<dbReference type="NCBIfam" id="NF001368">
    <property type="entry name" value="PRK00277.1"/>
    <property type="match status" value="1"/>
</dbReference>
<dbReference type="NCBIfam" id="NF009205">
    <property type="entry name" value="PRK12553.1"/>
    <property type="match status" value="1"/>
</dbReference>
<dbReference type="PANTHER" id="PTHR10381">
    <property type="entry name" value="ATP-DEPENDENT CLP PROTEASE PROTEOLYTIC SUBUNIT"/>
    <property type="match status" value="1"/>
</dbReference>
<dbReference type="PANTHER" id="PTHR10381:SF70">
    <property type="entry name" value="ATP-DEPENDENT CLP PROTEASE PROTEOLYTIC SUBUNIT"/>
    <property type="match status" value="1"/>
</dbReference>
<dbReference type="Pfam" id="PF00574">
    <property type="entry name" value="CLP_protease"/>
    <property type="match status" value="1"/>
</dbReference>
<dbReference type="PRINTS" id="PR00127">
    <property type="entry name" value="CLPPROTEASEP"/>
</dbReference>
<dbReference type="SUPFAM" id="SSF52096">
    <property type="entry name" value="ClpP/crotonase"/>
    <property type="match status" value="1"/>
</dbReference>
<dbReference type="PROSITE" id="PS00382">
    <property type="entry name" value="CLP_PROTEASE_HIS"/>
    <property type="match status" value="1"/>
</dbReference>
<dbReference type="PROSITE" id="PS00381">
    <property type="entry name" value="CLP_PROTEASE_SER"/>
    <property type="match status" value="1"/>
</dbReference>